<organism>
    <name type="scientific">Anaeromyxobacter dehalogenans (strain 2CP-C)</name>
    <dbReference type="NCBI Taxonomy" id="290397"/>
    <lineage>
        <taxon>Bacteria</taxon>
        <taxon>Pseudomonadati</taxon>
        <taxon>Myxococcota</taxon>
        <taxon>Myxococcia</taxon>
        <taxon>Myxococcales</taxon>
        <taxon>Cystobacterineae</taxon>
        <taxon>Anaeromyxobacteraceae</taxon>
        <taxon>Anaeromyxobacter</taxon>
    </lineage>
</organism>
<comment type="function">
    <text evidence="1">Involved in chemotaxis. Part of a chemotaxis signal transduction system that modulates chemotaxis in response to various stimuli. Catalyzes the demethylation of specific methylglutamate residues introduced into the chemoreceptors (methyl-accepting chemotaxis proteins or MCP) by CheR. Also mediates the irreversible deamidation of specific glutamine residues to glutamic acid.</text>
</comment>
<comment type="catalytic activity">
    <reaction evidence="1">
        <text>[protein]-L-glutamate 5-O-methyl ester + H2O = L-glutamyl-[protein] + methanol + H(+)</text>
        <dbReference type="Rhea" id="RHEA:23236"/>
        <dbReference type="Rhea" id="RHEA-COMP:10208"/>
        <dbReference type="Rhea" id="RHEA-COMP:10311"/>
        <dbReference type="ChEBI" id="CHEBI:15377"/>
        <dbReference type="ChEBI" id="CHEBI:15378"/>
        <dbReference type="ChEBI" id="CHEBI:17790"/>
        <dbReference type="ChEBI" id="CHEBI:29973"/>
        <dbReference type="ChEBI" id="CHEBI:82795"/>
        <dbReference type="EC" id="3.1.1.61"/>
    </reaction>
</comment>
<comment type="catalytic activity">
    <reaction evidence="1">
        <text>L-glutaminyl-[protein] + H2O = L-glutamyl-[protein] + NH4(+)</text>
        <dbReference type="Rhea" id="RHEA:16441"/>
        <dbReference type="Rhea" id="RHEA-COMP:10207"/>
        <dbReference type="Rhea" id="RHEA-COMP:10208"/>
        <dbReference type="ChEBI" id="CHEBI:15377"/>
        <dbReference type="ChEBI" id="CHEBI:28938"/>
        <dbReference type="ChEBI" id="CHEBI:29973"/>
        <dbReference type="ChEBI" id="CHEBI:30011"/>
        <dbReference type="EC" id="3.5.1.44"/>
    </reaction>
</comment>
<comment type="subcellular location">
    <subcellularLocation>
        <location evidence="1">Cytoplasm</location>
    </subcellularLocation>
</comment>
<comment type="domain">
    <text evidence="1">Contains a C-terminal catalytic domain, and an N-terminal region which modulates catalytic activity.</text>
</comment>
<comment type="PTM">
    <text evidence="1">Phosphorylated by CheA. Phosphorylation of the N-terminal regulatory domain activates the methylesterase activity.</text>
</comment>
<comment type="similarity">
    <text evidence="1">Belongs to the CheB family.</text>
</comment>
<sequence>MAPRILVVDDSAVVRMALSQILGRAGLEVETAIDPLVAMDKMRRARPDAIVLDIEMPRMDGLTFLDRVMAQDPVPVVVCSGLAGPGSEVALHALEHGAVDVIEKPRLGVKGFLEDSARRIVEVVRAATQARLRARVRALRPLPRPPAGAQPRPAPRLAPRAGRAELVVVGASTGGTEALRVLLEAMPADAPAIAVVQHMPEVFTAQFAKRLDKLCRIEVKEAADGDRLLPGRALVAPGNRHLSVKRAGGLVAVVSDGPPVSLHRPSVNVLFHSAARVAGPGTLGILLTGMGDDGADGLLELRRAGAHTVAQDESTSVVFGMPKEAIARGAAVEVLPLPRVASAVLAWAR</sequence>
<evidence type="ECO:0000255" key="1">
    <source>
        <dbReference type="HAMAP-Rule" id="MF_00099"/>
    </source>
</evidence>
<dbReference type="EC" id="3.1.1.61" evidence="1"/>
<dbReference type="EC" id="3.5.1.44" evidence="1"/>
<dbReference type="EMBL" id="CP000251">
    <property type="protein sequence ID" value="ABC80376.1"/>
    <property type="molecule type" value="Genomic_DNA"/>
</dbReference>
<dbReference type="RefSeq" id="WP_011419659.1">
    <property type="nucleotide sequence ID" value="NC_007760.1"/>
</dbReference>
<dbReference type="SMR" id="Q2INJ8"/>
<dbReference type="STRING" id="290397.Adeh_0600"/>
<dbReference type="KEGG" id="ade:Adeh_0600"/>
<dbReference type="eggNOG" id="COG2201">
    <property type="taxonomic scope" value="Bacteria"/>
</dbReference>
<dbReference type="HOGENOM" id="CLU_000445_51_0_7"/>
<dbReference type="OrthoDB" id="9793421at2"/>
<dbReference type="Proteomes" id="UP000001935">
    <property type="component" value="Chromosome"/>
</dbReference>
<dbReference type="GO" id="GO:0005737">
    <property type="term" value="C:cytoplasm"/>
    <property type="evidence" value="ECO:0007669"/>
    <property type="project" value="UniProtKB-SubCell"/>
</dbReference>
<dbReference type="GO" id="GO:0000156">
    <property type="term" value="F:phosphorelay response regulator activity"/>
    <property type="evidence" value="ECO:0007669"/>
    <property type="project" value="InterPro"/>
</dbReference>
<dbReference type="GO" id="GO:0008984">
    <property type="term" value="F:protein-glutamate methylesterase activity"/>
    <property type="evidence" value="ECO:0007669"/>
    <property type="project" value="UniProtKB-UniRule"/>
</dbReference>
<dbReference type="GO" id="GO:0050568">
    <property type="term" value="F:protein-glutamine glutaminase activity"/>
    <property type="evidence" value="ECO:0007669"/>
    <property type="project" value="UniProtKB-UniRule"/>
</dbReference>
<dbReference type="GO" id="GO:0006935">
    <property type="term" value="P:chemotaxis"/>
    <property type="evidence" value="ECO:0007669"/>
    <property type="project" value="UniProtKB-UniRule"/>
</dbReference>
<dbReference type="CDD" id="cd16432">
    <property type="entry name" value="CheB_Rec"/>
    <property type="match status" value="1"/>
</dbReference>
<dbReference type="CDD" id="cd17541">
    <property type="entry name" value="REC_CheB-like"/>
    <property type="match status" value="1"/>
</dbReference>
<dbReference type="Gene3D" id="3.40.50.2300">
    <property type="match status" value="1"/>
</dbReference>
<dbReference type="Gene3D" id="3.40.50.180">
    <property type="entry name" value="Methylesterase CheB, C-terminal domain"/>
    <property type="match status" value="1"/>
</dbReference>
<dbReference type="HAMAP" id="MF_00099">
    <property type="entry name" value="CheB_chemtxs"/>
    <property type="match status" value="1"/>
</dbReference>
<dbReference type="InterPro" id="IPR008248">
    <property type="entry name" value="CheB-like"/>
</dbReference>
<dbReference type="InterPro" id="IPR035909">
    <property type="entry name" value="CheB_C"/>
</dbReference>
<dbReference type="InterPro" id="IPR011006">
    <property type="entry name" value="CheY-like_superfamily"/>
</dbReference>
<dbReference type="InterPro" id="IPR000673">
    <property type="entry name" value="Sig_transdc_resp-reg_Me-estase"/>
</dbReference>
<dbReference type="InterPro" id="IPR001789">
    <property type="entry name" value="Sig_transdc_resp-reg_receiver"/>
</dbReference>
<dbReference type="NCBIfam" id="NF001965">
    <property type="entry name" value="PRK00742.1"/>
    <property type="match status" value="1"/>
</dbReference>
<dbReference type="NCBIfam" id="NF009206">
    <property type="entry name" value="PRK12555.1"/>
    <property type="match status" value="1"/>
</dbReference>
<dbReference type="PANTHER" id="PTHR42872">
    <property type="entry name" value="PROTEIN-GLUTAMATE METHYLESTERASE/PROTEIN-GLUTAMINE GLUTAMINASE"/>
    <property type="match status" value="1"/>
</dbReference>
<dbReference type="PANTHER" id="PTHR42872:SF6">
    <property type="entry name" value="PROTEIN-GLUTAMATE METHYLESTERASE_PROTEIN-GLUTAMINE GLUTAMINASE"/>
    <property type="match status" value="1"/>
</dbReference>
<dbReference type="Pfam" id="PF01339">
    <property type="entry name" value="CheB_methylest"/>
    <property type="match status" value="1"/>
</dbReference>
<dbReference type="Pfam" id="PF00072">
    <property type="entry name" value="Response_reg"/>
    <property type="match status" value="1"/>
</dbReference>
<dbReference type="PIRSF" id="PIRSF000876">
    <property type="entry name" value="RR_chemtxs_CheB"/>
    <property type="match status" value="1"/>
</dbReference>
<dbReference type="SMART" id="SM00448">
    <property type="entry name" value="REC"/>
    <property type="match status" value="1"/>
</dbReference>
<dbReference type="SUPFAM" id="SSF52172">
    <property type="entry name" value="CheY-like"/>
    <property type="match status" value="1"/>
</dbReference>
<dbReference type="SUPFAM" id="SSF52738">
    <property type="entry name" value="Methylesterase CheB, C-terminal domain"/>
    <property type="match status" value="1"/>
</dbReference>
<dbReference type="PROSITE" id="PS50122">
    <property type="entry name" value="CHEB"/>
    <property type="match status" value="1"/>
</dbReference>
<dbReference type="PROSITE" id="PS50110">
    <property type="entry name" value="RESPONSE_REGULATORY"/>
    <property type="match status" value="1"/>
</dbReference>
<keyword id="KW-0145">Chemotaxis</keyword>
<keyword id="KW-0963">Cytoplasm</keyword>
<keyword id="KW-0378">Hydrolase</keyword>
<keyword id="KW-0597">Phosphoprotein</keyword>
<keyword id="KW-1185">Reference proteome</keyword>
<accession>Q2INJ8</accession>
<feature type="chain" id="PRO_0000264256" description="Protein-glutamate methylesterase/protein-glutamine glutaminase 1">
    <location>
        <begin position="1"/>
        <end position="349"/>
    </location>
</feature>
<feature type="domain" description="Response regulatory" evidence="1">
    <location>
        <begin position="4"/>
        <end position="119"/>
    </location>
</feature>
<feature type="domain" description="CheB-type methylesterase" evidence="1">
    <location>
        <begin position="159"/>
        <end position="349"/>
    </location>
</feature>
<feature type="active site" evidence="1">
    <location>
        <position position="172"/>
    </location>
</feature>
<feature type="active site" evidence="1">
    <location>
        <position position="198"/>
    </location>
</feature>
<feature type="active site" evidence="1">
    <location>
        <position position="293"/>
    </location>
</feature>
<feature type="modified residue" description="4-aspartylphosphate" evidence="1">
    <location>
        <position position="53"/>
    </location>
</feature>
<gene>
    <name evidence="1" type="primary">cheB1</name>
    <name type="ordered locus">Adeh_0600</name>
</gene>
<protein>
    <recommendedName>
        <fullName evidence="1">Protein-glutamate methylesterase/protein-glutamine glutaminase 1</fullName>
        <ecNumber evidence="1">3.1.1.61</ecNumber>
        <ecNumber evidence="1">3.5.1.44</ecNumber>
    </recommendedName>
</protein>
<reference key="1">
    <citation type="submission" date="2006-01" db="EMBL/GenBank/DDBJ databases">
        <title>Complete sequence of Anaeromyxobacter dehalogenans 2CP-C.</title>
        <authorList>
            <person name="Copeland A."/>
            <person name="Lucas S."/>
            <person name="Lapidus A."/>
            <person name="Barry K."/>
            <person name="Detter J.C."/>
            <person name="Glavina T."/>
            <person name="Hammon N."/>
            <person name="Israni S."/>
            <person name="Pitluck S."/>
            <person name="Brettin T."/>
            <person name="Bruce D."/>
            <person name="Han C."/>
            <person name="Tapia R."/>
            <person name="Gilna P."/>
            <person name="Kiss H."/>
            <person name="Schmutz J."/>
            <person name="Larimer F."/>
            <person name="Land M."/>
            <person name="Kyrpides N."/>
            <person name="Anderson I."/>
            <person name="Sanford R.A."/>
            <person name="Ritalahti K.M."/>
            <person name="Thomas H.S."/>
            <person name="Kirby J.R."/>
            <person name="Zhulin I.B."/>
            <person name="Loeffler F.E."/>
            <person name="Richardson P."/>
        </authorList>
    </citation>
    <scope>NUCLEOTIDE SEQUENCE [LARGE SCALE GENOMIC DNA]</scope>
    <source>
        <strain>2CP-C</strain>
    </source>
</reference>
<proteinExistence type="inferred from homology"/>
<name>CHEB1_ANADE</name>